<geneLocation type="chloroplast"/>
<feature type="chain" id="PRO_0000217561" description="Photosystem II reaction center protein M">
    <location>
        <begin position="1"/>
        <end position="31"/>
    </location>
</feature>
<feature type="transmembrane region" description="Helical" evidence="1">
    <location>
        <begin position="5"/>
        <end position="25"/>
    </location>
</feature>
<dbReference type="EMBL" id="AF166114">
    <property type="protein sequence ID" value="AAF43843.1"/>
    <property type="molecule type" value="Genomic_DNA"/>
</dbReference>
<dbReference type="RefSeq" id="NP_038403.1">
    <property type="nucleotide sequence ID" value="NC_002186.1"/>
</dbReference>
<dbReference type="SMR" id="Q9MUQ7"/>
<dbReference type="GeneID" id="800884"/>
<dbReference type="GO" id="GO:0009535">
    <property type="term" value="C:chloroplast thylakoid membrane"/>
    <property type="evidence" value="ECO:0007669"/>
    <property type="project" value="UniProtKB-SubCell"/>
</dbReference>
<dbReference type="GO" id="GO:0009523">
    <property type="term" value="C:photosystem II"/>
    <property type="evidence" value="ECO:0007669"/>
    <property type="project" value="UniProtKB-KW"/>
</dbReference>
<dbReference type="GO" id="GO:0019684">
    <property type="term" value="P:photosynthesis, light reaction"/>
    <property type="evidence" value="ECO:0007669"/>
    <property type="project" value="InterPro"/>
</dbReference>
<dbReference type="HAMAP" id="MF_00438">
    <property type="entry name" value="PSII_PsbM"/>
    <property type="match status" value="1"/>
</dbReference>
<dbReference type="InterPro" id="IPR007826">
    <property type="entry name" value="PSII_PsbM"/>
</dbReference>
<dbReference type="InterPro" id="IPR037269">
    <property type="entry name" value="PSII_PsbM_sf"/>
</dbReference>
<dbReference type="NCBIfam" id="TIGR03038">
    <property type="entry name" value="PS_II_psbM"/>
    <property type="match status" value="1"/>
</dbReference>
<dbReference type="PANTHER" id="PTHR35774">
    <property type="entry name" value="PHOTOSYSTEM II REACTION CENTER PROTEIN M"/>
    <property type="match status" value="1"/>
</dbReference>
<dbReference type="PANTHER" id="PTHR35774:SF1">
    <property type="entry name" value="PHOTOSYSTEM II REACTION CENTER PROTEIN M"/>
    <property type="match status" value="1"/>
</dbReference>
<dbReference type="Pfam" id="PF05151">
    <property type="entry name" value="PsbM"/>
    <property type="match status" value="1"/>
</dbReference>
<dbReference type="SUPFAM" id="SSF161033">
    <property type="entry name" value="Photosystem II reaction center protein M, PsbM"/>
    <property type="match status" value="1"/>
</dbReference>
<proteinExistence type="inferred from homology"/>
<sequence length="31" mass="3453">METNILALMATALFIIIPTAFLIILYAQTNK</sequence>
<gene>
    <name evidence="1" type="primary">psbM</name>
</gene>
<reference key="1">
    <citation type="journal article" date="2000" name="Nature">
        <title>Ancestral chloroplast genome in Mesostigma viride reveals an early branch of green plant evolution.</title>
        <authorList>
            <person name="Lemieux C."/>
            <person name="Otis C."/>
            <person name="Turmel M."/>
        </authorList>
    </citation>
    <scope>NUCLEOTIDE SEQUENCE [LARGE SCALE GENOMIC DNA]</scope>
    <source>
        <strain>NIES-296 / KY-14 / CCMP 2046</strain>
    </source>
</reference>
<accession>Q9MUQ7</accession>
<keyword id="KW-0150">Chloroplast</keyword>
<keyword id="KW-0472">Membrane</keyword>
<keyword id="KW-0602">Photosynthesis</keyword>
<keyword id="KW-0604">Photosystem II</keyword>
<keyword id="KW-0934">Plastid</keyword>
<keyword id="KW-0674">Reaction center</keyword>
<keyword id="KW-0793">Thylakoid</keyword>
<keyword id="KW-0812">Transmembrane</keyword>
<keyword id="KW-1133">Transmembrane helix</keyword>
<name>PSBM_MESVI</name>
<evidence type="ECO:0000255" key="1">
    <source>
        <dbReference type="HAMAP-Rule" id="MF_00438"/>
    </source>
</evidence>
<protein>
    <recommendedName>
        <fullName evidence="1">Photosystem II reaction center protein M</fullName>
        <shortName evidence="1">PSII-M</shortName>
    </recommendedName>
</protein>
<organism>
    <name type="scientific">Mesostigma viride</name>
    <name type="common">Green alga</name>
    <dbReference type="NCBI Taxonomy" id="41882"/>
    <lineage>
        <taxon>Eukaryota</taxon>
        <taxon>Viridiplantae</taxon>
        <taxon>Streptophyta</taxon>
        <taxon>Mesostigmatophyceae</taxon>
        <taxon>Mesostigmatales</taxon>
        <taxon>Mesostigmataceae</taxon>
        <taxon>Mesostigma</taxon>
    </lineage>
</organism>
<comment type="function">
    <text evidence="1">One of the components of the core complex of photosystem II (PSII). PSII is a light-driven water:plastoquinone oxidoreductase that uses light energy to abstract electrons from H(2)O, generating O(2) and a proton gradient subsequently used for ATP formation. It consists of a core antenna complex that captures photons, and an electron transfer chain that converts photonic excitation into a charge separation. This subunit is found at the monomer-monomer interface.</text>
</comment>
<comment type="subunit">
    <text evidence="1">PSII is composed of 1 copy each of membrane proteins PsbA, PsbB, PsbC, PsbD, PsbE, PsbF, PsbH, PsbI, PsbJ, PsbK, PsbL, PsbM, PsbT, PsbX, PsbY, PsbZ, Psb30/Ycf12, at least 3 peripheral proteins of the oxygen-evolving complex and a large number of cofactors. It forms dimeric complexes.</text>
</comment>
<comment type="subcellular location">
    <subcellularLocation>
        <location evidence="1">Plastid</location>
        <location evidence="1">Chloroplast thylakoid membrane</location>
        <topology evidence="1">Single-pass membrane protein</topology>
    </subcellularLocation>
</comment>
<comment type="similarity">
    <text evidence="1">Belongs to the PsbM family.</text>
</comment>